<keyword id="KW-0067">ATP-binding</keyword>
<keyword id="KW-0378">Hydrolase</keyword>
<keyword id="KW-0408">Iron</keyword>
<keyword id="KW-0411">Iron-sulfur</keyword>
<keyword id="KW-0479">Metal-binding</keyword>
<keyword id="KW-0547">Nucleotide-binding</keyword>
<gene>
    <name type="ordered locus">PH0949</name>
</gene>
<organism>
    <name type="scientific">Pyrococcus horikoshii (strain ATCC 700860 / DSM 12428 / JCM 9974 / NBRC 100139 / OT-3)</name>
    <dbReference type="NCBI Taxonomy" id="70601"/>
    <lineage>
        <taxon>Archaea</taxon>
        <taxon>Methanobacteriati</taxon>
        <taxon>Methanobacteriota</taxon>
        <taxon>Thermococci</taxon>
        <taxon>Thermococcales</taxon>
        <taxon>Thermococcaceae</taxon>
        <taxon>Pyrococcus</taxon>
    </lineage>
</organism>
<evidence type="ECO:0000255" key="1">
    <source>
        <dbReference type="HAMAP-Rule" id="MF_02040"/>
    </source>
</evidence>
<reference key="1">
    <citation type="journal article" date="1998" name="DNA Res.">
        <title>Complete sequence and gene organization of the genome of a hyper-thermophilic archaebacterium, Pyrococcus horikoshii OT3.</title>
        <authorList>
            <person name="Kawarabayasi Y."/>
            <person name="Sawada M."/>
            <person name="Horikawa H."/>
            <person name="Haikawa Y."/>
            <person name="Hino Y."/>
            <person name="Yamamoto S."/>
            <person name="Sekine M."/>
            <person name="Baba S."/>
            <person name="Kosugi H."/>
            <person name="Hosoyama A."/>
            <person name="Nagai Y."/>
            <person name="Sakai M."/>
            <person name="Ogura K."/>
            <person name="Otsuka R."/>
            <person name="Nakazawa H."/>
            <person name="Takamiya M."/>
            <person name="Ohfuku Y."/>
            <person name="Funahashi T."/>
            <person name="Tanaka T."/>
            <person name="Kudoh Y."/>
            <person name="Yamazaki J."/>
            <person name="Kushida N."/>
            <person name="Oguchi A."/>
            <person name="Aoki K."/>
            <person name="Yoshizawa T."/>
            <person name="Nakamura Y."/>
            <person name="Robb F.T."/>
            <person name="Horikoshi K."/>
            <person name="Masuchi Y."/>
            <person name="Shizuya H."/>
            <person name="Kikuchi H."/>
        </authorList>
    </citation>
    <scope>NUCLEOTIDE SEQUENCE [LARGE SCALE GENOMIC DNA]</scope>
    <source>
        <strain>ATCC 700860 / DSM 12428 / JCM 9974 / NBRC 100139 / OT-3</strain>
    </source>
</reference>
<name>APBC_PYRHO</name>
<dbReference type="EMBL" id="BA000001">
    <property type="protein sequence ID" value="BAA30046.1"/>
    <property type="molecule type" value="Genomic_DNA"/>
</dbReference>
<dbReference type="PIR" id="H71085">
    <property type="entry name" value="H71085"/>
</dbReference>
<dbReference type="RefSeq" id="WP_010885042.1">
    <property type="nucleotide sequence ID" value="NC_000961.1"/>
</dbReference>
<dbReference type="SMR" id="O58667"/>
<dbReference type="STRING" id="70601.gene:9377904"/>
<dbReference type="EnsemblBacteria" id="BAA30046">
    <property type="protein sequence ID" value="BAA30046"/>
    <property type="gene ID" value="BAA30046"/>
</dbReference>
<dbReference type="GeneID" id="1443277"/>
<dbReference type="KEGG" id="pho:PH0949"/>
<dbReference type="eggNOG" id="arCOG00585">
    <property type="taxonomic scope" value="Archaea"/>
</dbReference>
<dbReference type="OrthoDB" id="8297at2157"/>
<dbReference type="Proteomes" id="UP000000752">
    <property type="component" value="Chromosome"/>
</dbReference>
<dbReference type="GO" id="GO:0051539">
    <property type="term" value="F:4 iron, 4 sulfur cluster binding"/>
    <property type="evidence" value="ECO:0007669"/>
    <property type="project" value="TreeGrafter"/>
</dbReference>
<dbReference type="GO" id="GO:0005524">
    <property type="term" value="F:ATP binding"/>
    <property type="evidence" value="ECO:0007669"/>
    <property type="project" value="UniProtKB-UniRule"/>
</dbReference>
<dbReference type="GO" id="GO:0016887">
    <property type="term" value="F:ATP hydrolysis activity"/>
    <property type="evidence" value="ECO:0007669"/>
    <property type="project" value="UniProtKB-UniRule"/>
</dbReference>
<dbReference type="GO" id="GO:0140663">
    <property type="term" value="F:ATP-dependent FeS chaperone activity"/>
    <property type="evidence" value="ECO:0007669"/>
    <property type="project" value="InterPro"/>
</dbReference>
<dbReference type="GO" id="GO:0046872">
    <property type="term" value="F:metal ion binding"/>
    <property type="evidence" value="ECO:0007669"/>
    <property type="project" value="UniProtKB-KW"/>
</dbReference>
<dbReference type="GO" id="GO:0016226">
    <property type="term" value="P:iron-sulfur cluster assembly"/>
    <property type="evidence" value="ECO:0007669"/>
    <property type="project" value="InterPro"/>
</dbReference>
<dbReference type="CDD" id="cd02037">
    <property type="entry name" value="Mrp_NBP35"/>
    <property type="match status" value="1"/>
</dbReference>
<dbReference type="FunFam" id="3.40.50.300:FF:001119">
    <property type="entry name" value="Iron-sulfur cluster carrier protein"/>
    <property type="match status" value="1"/>
</dbReference>
<dbReference type="Gene3D" id="3.40.50.300">
    <property type="entry name" value="P-loop containing nucleotide triphosphate hydrolases"/>
    <property type="match status" value="1"/>
</dbReference>
<dbReference type="HAMAP" id="MF_02040">
    <property type="entry name" value="Mrp_NBP35"/>
    <property type="match status" value="1"/>
</dbReference>
<dbReference type="InterPro" id="IPR000808">
    <property type="entry name" value="Mrp-like_CS"/>
</dbReference>
<dbReference type="InterPro" id="IPR019591">
    <property type="entry name" value="Mrp/NBP35_ATP-bd"/>
</dbReference>
<dbReference type="InterPro" id="IPR044304">
    <property type="entry name" value="NUBPL-like"/>
</dbReference>
<dbReference type="InterPro" id="IPR027417">
    <property type="entry name" value="P-loop_NTPase"/>
</dbReference>
<dbReference type="InterPro" id="IPR033756">
    <property type="entry name" value="YlxH/NBP35"/>
</dbReference>
<dbReference type="PANTHER" id="PTHR42961">
    <property type="entry name" value="IRON-SULFUR PROTEIN NUBPL"/>
    <property type="match status" value="1"/>
</dbReference>
<dbReference type="PANTHER" id="PTHR42961:SF2">
    <property type="entry name" value="IRON-SULFUR PROTEIN NUBPL"/>
    <property type="match status" value="1"/>
</dbReference>
<dbReference type="Pfam" id="PF10609">
    <property type="entry name" value="ParA"/>
    <property type="match status" value="1"/>
</dbReference>
<dbReference type="SUPFAM" id="SSF52540">
    <property type="entry name" value="P-loop containing nucleoside triphosphate hydrolases"/>
    <property type="match status" value="1"/>
</dbReference>
<dbReference type="PROSITE" id="PS01215">
    <property type="entry name" value="MRP"/>
    <property type="match status" value="1"/>
</dbReference>
<comment type="function">
    <text evidence="1">Binds and transfers iron-sulfur (Fe-S) clusters to target apoproteins. Can hydrolyze ATP.</text>
</comment>
<comment type="subunit">
    <text evidence="1">Homodimer.</text>
</comment>
<comment type="similarity">
    <text evidence="1">Belongs to the Mrp/NBP35 ATP-binding proteins family.</text>
</comment>
<protein>
    <recommendedName>
        <fullName evidence="1">Iron-sulfur cluster carrier protein</fullName>
    </recommendedName>
</protein>
<feature type="chain" id="PRO_0000184956" description="Iron-sulfur cluster carrier protein">
    <location>
        <begin position="1"/>
        <end position="295"/>
    </location>
</feature>
<feature type="binding site" evidence="1">
    <location>
        <begin position="38"/>
        <end position="45"/>
    </location>
    <ligand>
        <name>ATP</name>
        <dbReference type="ChEBI" id="CHEBI:30616"/>
    </ligand>
</feature>
<proteinExistence type="inferred from homology"/>
<accession>O58667</accession>
<sequence length="295" mass="32033">MTIKTPTVKVPGLGTDPLEQRIKEKEKKWKYKIAVLSGKGGVGKSTVAVNLTAALAKMGYFVGILDADIHGPNVAKMLGVDKEEVYAEKFDDGHFEMIPPTTDFMGQVTPIKVMSMGMMVPEDQPVIWRGPLVTKAIKQLLGDVKWGSLDFMIIDFPPGTGDEILTVVQSIKLDAAIIVTTPQEVALLDTGKAVNMMKKMEVPYVAVVENMSYLICPHCGNKIDIFGEGGGEKLAQKEGVDFLGKIPIDLKAREASDLGIPIVLYEDTPAAKAFMELAEKLVNKLKEIKGDGGKE</sequence>